<dbReference type="EMBL" id="X79489">
    <property type="protein sequence ID" value="CAA56019.1"/>
    <property type="molecule type" value="Genomic_DNA"/>
</dbReference>
<dbReference type="EMBL" id="Z35847">
    <property type="protein sequence ID" value="CAA84907.1"/>
    <property type="molecule type" value="Genomic_DNA"/>
</dbReference>
<dbReference type="EMBL" id="AY692644">
    <property type="protein sequence ID" value="AAT92663.1"/>
    <property type="molecule type" value="Genomic_DNA"/>
</dbReference>
<dbReference type="EMBL" id="BK006936">
    <property type="protein sequence ID" value="DAA07038.1"/>
    <property type="molecule type" value="Genomic_DNA"/>
</dbReference>
<dbReference type="PIR" id="S45419">
    <property type="entry name" value="S45419"/>
</dbReference>
<dbReference type="RefSeq" id="NP_009467.1">
    <property type="nucleotide sequence ID" value="NM_001178326.1"/>
</dbReference>
<dbReference type="BioGRID" id="32618">
    <property type="interactions" value="109"/>
</dbReference>
<dbReference type="DIP" id="DIP-3948N"/>
<dbReference type="FunCoup" id="P38177">
    <property type="interactions" value="32"/>
</dbReference>
<dbReference type="IntAct" id="P38177">
    <property type="interactions" value="10"/>
</dbReference>
<dbReference type="MINT" id="P38177"/>
<dbReference type="STRING" id="4932.YBL086C"/>
<dbReference type="iPTMnet" id="P38177"/>
<dbReference type="PaxDb" id="4932-YBL086C"/>
<dbReference type="PeptideAtlas" id="P38177"/>
<dbReference type="EnsemblFungi" id="YBL086C_mRNA">
    <property type="protein sequence ID" value="YBL086C"/>
    <property type="gene ID" value="YBL086C"/>
</dbReference>
<dbReference type="GeneID" id="852192"/>
<dbReference type="KEGG" id="sce:YBL086C"/>
<dbReference type="AGR" id="SGD:S000000182"/>
<dbReference type="SGD" id="S000000182">
    <property type="gene designation" value="YBL086C"/>
</dbReference>
<dbReference type="VEuPathDB" id="FungiDB:YBL086C"/>
<dbReference type="eggNOG" id="ENOG502R9IN">
    <property type="taxonomic scope" value="Eukaryota"/>
</dbReference>
<dbReference type="HOGENOM" id="CLU_036649_0_0_1"/>
<dbReference type="InParanoid" id="P38177"/>
<dbReference type="OMA" id="SSGYCYV"/>
<dbReference type="OrthoDB" id="3365224at2759"/>
<dbReference type="BioCyc" id="YEAST:G3O-28975-MONOMER"/>
<dbReference type="BioGRID-ORCS" id="852192">
    <property type="hits" value="0 hits in 10 CRISPR screens"/>
</dbReference>
<dbReference type="PRO" id="PR:P38177"/>
<dbReference type="Proteomes" id="UP000002311">
    <property type="component" value="Chromosome II"/>
</dbReference>
<dbReference type="RNAct" id="P38177">
    <property type="molecule type" value="protein"/>
</dbReference>
<dbReference type="InterPro" id="IPR039931">
    <property type="entry name" value="EEIG1/2-like"/>
</dbReference>
<dbReference type="InterPro" id="IPR019448">
    <property type="entry name" value="NT-C2"/>
</dbReference>
<dbReference type="PANTHER" id="PTHR21456:SF1">
    <property type="entry name" value="C2 NT-TYPE DOMAIN-CONTAINING PROTEIN"/>
    <property type="match status" value="1"/>
</dbReference>
<dbReference type="PANTHER" id="PTHR21456">
    <property type="entry name" value="FAMILY WITH SEQUENCE SIMILARITY 102"/>
    <property type="match status" value="1"/>
</dbReference>
<dbReference type="Pfam" id="PF10358">
    <property type="entry name" value="NT-C2"/>
    <property type="match status" value="1"/>
</dbReference>
<dbReference type="PROSITE" id="PS51840">
    <property type="entry name" value="C2_NT"/>
    <property type="match status" value="1"/>
</dbReference>
<keyword id="KW-0597">Phosphoprotein</keyword>
<keyword id="KW-1185">Reference proteome</keyword>
<proteinExistence type="evidence at protein level"/>
<name>YBI6_YEAST</name>
<protein>
    <recommendedName>
        <fullName>Uncharacterized protein YBL086C</fullName>
    </recommendedName>
</protein>
<evidence type="ECO:0000255" key="1">
    <source>
        <dbReference type="PROSITE-ProRule" id="PRU01186"/>
    </source>
</evidence>
<evidence type="ECO:0000256" key="2">
    <source>
        <dbReference type="SAM" id="MobiDB-lite"/>
    </source>
</evidence>
<evidence type="ECO:0000269" key="3">
    <source>
    </source>
</evidence>
<evidence type="ECO:0000305" key="4"/>
<evidence type="ECO:0007744" key="5">
    <source>
    </source>
</evidence>
<evidence type="ECO:0007744" key="6">
    <source>
    </source>
</evidence>
<gene>
    <name type="ordered locus">YBL086C</name>
    <name type="ORF">YBL0714</name>
</gene>
<sequence length="466" mass="51997">MPFNHNSKAKRPKFLLDLQIKELVNIPQSSGYCYTKWRLKDGTGTSGHKVALDGEHQTTSTQSRGTTKHVHVQHHRAQWNYSLDKPILVKLHLDKNGRFLKKILVLDVFFEFADANSSLTSSSSPNGKVKKTTYANATALTATGNNSYSQKITGKLLLGTVDIDITEYVKEDETPTTNRFLLKHSKVNSIINVSLQLKLVRGSYEDFNISKSFTNGQLANYRPGINTILDNTSELSSPTSTTNQMSPKNTFSNFNGIGTTVAKPGTNATGNSTSIKSPTSTNHKSSEMTTKPGLSTTISSSMSPLIESLYQKTFKLPWDPRPGEFTPRECVEDILQGGNGWAKNEKGINLIDLQALRLNEMEEEYYNPNYGNNLGNKASSWPPNPSDDGYSTMGKREYLEKKQNWSHMSRAQRAKLRTHNDEDNENTANDKGSDKDNNSVEDNNPTDFLTDRIRENKNWSIITPSG</sequence>
<accession>P38177</accession>
<accession>D6VPR8</accession>
<accession>Q6B2T6</accession>
<organism>
    <name type="scientific">Saccharomyces cerevisiae (strain ATCC 204508 / S288c)</name>
    <name type="common">Baker's yeast</name>
    <dbReference type="NCBI Taxonomy" id="559292"/>
    <lineage>
        <taxon>Eukaryota</taxon>
        <taxon>Fungi</taxon>
        <taxon>Dikarya</taxon>
        <taxon>Ascomycota</taxon>
        <taxon>Saccharomycotina</taxon>
        <taxon>Saccharomycetes</taxon>
        <taxon>Saccharomycetales</taxon>
        <taxon>Saccharomycetaceae</taxon>
        <taxon>Saccharomyces</taxon>
    </lineage>
</organism>
<reference key="1">
    <citation type="journal article" date="1995" name="Yeast">
        <title>Sequence analysis of a 78.6 kb segment of the left end of Saccharomyces cerevisiae chromosome II.</title>
        <authorList>
            <person name="Obermaier B."/>
            <person name="Gassenhuber J."/>
            <person name="Piravandi E."/>
            <person name="Domdey H."/>
        </authorList>
    </citation>
    <scope>NUCLEOTIDE SEQUENCE [GENOMIC DNA]</scope>
    <source>
        <strain>ATCC 204508 / S288c</strain>
    </source>
</reference>
<reference key="2">
    <citation type="journal article" date="1994" name="EMBO J.">
        <title>Complete DNA sequence of yeast chromosome II.</title>
        <authorList>
            <person name="Feldmann H."/>
            <person name="Aigle M."/>
            <person name="Aljinovic G."/>
            <person name="Andre B."/>
            <person name="Baclet M.C."/>
            <person name="Barthe C."/>
            <person name="Baur A."/>
            <person name="Becam A.-M."/>
            <person name="Biteau N."/>
            <person name="Boles E."/>
            <person name="Brandt T."/>
            <person name="Brendel M."/>
            <person name="Brueckner M."/>
            <person name="Bussereau F."/>
            <person name="Christiansen C."/>
            <person name="Contreras R."/>
            <person name="Crouzet M."/>
            <person name="Cziepluch C."/>
            <person name="Demolis N."/>
            <person name="Delaveau T."/>
            <person name="Doignon F."/>
            <person name="Domdey H."/>
            <person name="Duesterhus S."/>
            <person name="Dubois E."/>
            <person name="Dujon B."/>
            <person name="El Bakkoury M."/>
            <person name="Entian K.-D."/>
            <person name="Feuermann M."/>
            <person name="Fiers W."/>
            <person name="Fobo G.M."/>
            <person name="Fritz C."/>
            <person name="Gassenhuber J."/>
            <person name="Glansdorff N."/>
            <person name="Goffeau A."/>
            <person name="Grivell L.A."/>
            <person name="de Haan M."/>
            <person name="Hein C."/>
            <person name="Herbert C.J."/>
            <person name="Hollenberg C.P."/>
            <person name="Holmstroem K."/>
            <person name="Jacq C."/>
            <person name="Jacquet M."/>
            <person name="Jauniaux J.-C."/>
            <person name="Jonniaux J.-L."/>
            <person name="Kallesoee T."/>
            <person name="Kiesau P."/>
            <person name="Kirchrath L."/>
            <person name="Koetter P."/>
            <person name="Korol S."/>
            <person name="Liebl S."/>
            <person name="Logghe M."/>
            <person name="Lohan A.J.E."/>
            <person name="Louis E.J."/>
            <person name="Li Z.Y."/>
            <person name="Maat M.J."/>
            <person name="Mallet L."/>
            <person name="Mannhaupt G."/>
            <person name="Messenguy F."/>
            <person name="Miosga T."/>
            <person name="Molemans F."/>
            <person name="Mueller S."/>
            <person name="Nasr F."/>
            <person name="Obermaier B."/>
            <person name="Perea J."/>
            <person name="Pierard A."/>
            <person name="Piravandi E."/>
            <person name="Pohl F.M."/>
            <person name="Pohl T.M."/>
            <person name="Potier S."/>
            <person name="Proft M."/>
            <person name="Purnelle B."/>
            <person name="Ramezani Rad M."/>
            <person name="Rieger M."/>
            <person name="Rose M."/>
            <person name="Schaaff-Gerstenschlaeger I."/>
            <person name="Scherens B."/>
            <person name="Schwarzlose C."/>
            <person name="Skala J."/>
            <person name="Slonimski P.P."/>
            <person name="Smits P.H.M."/>
            <person name="Souciet J.-L."/>
            <person name="Steensma H.Y."/>
            <person name="Stucka R."/>
            <person name="Urrestarazu L.A."/>
            <person name="van der Aart Q.J.M."/>
            <person name="Van Dyck L."/>
            <person name="Vassarotti A."/>
            <person name="Vetter I."/>
            <person name="Vierendeels F."/>
            <person name="Vissers S."/>
            <person name="Wagner G."/>
            <person name="de Wergifosse P."/>
            <person name="Wolfe K.H."/>
            <person name="Zagulski M."/>
            <person name="Zimmermann F.K."/>
            <person name="Mewes H.-W."/>
            <person name="Kleine K."/>
        </authorList>
    </citation>
    <scope>NUCLEOTIDE SEQUENCE [LARGE SCALE GENOMIC DNA]</scope>
    <source>
        <strain>ATCC 204508 / S288c</strain>
    </source>
</reference>
<reference key="3">
    <citation type="journal article" date="2014" name="G3 (Bethesda)">
        <title>The reference genome sequence of Saccharomyces cerevisiae: Then and now.</title>
        <authorList>
            <person name="Engel S.R."/>
            <person name="Dietrich F.S."/>
            <person name="Fisk D.G."/>
            <person name="Binkley G."/>
            <person name="Balakrishnan R."/>
            <person name="Costanzo M.C."/>
            <person name="Dwight S.S."/>
            <person name="Hitz B.C."/>
            <person name="Karra K."/>
            <person name="Nash R.S."/>
            <person name="Weng S."/>
            <person name="Wong E.D."/>
            <person name="Lloyd P."/>
            <person name="Skrzypek M.S."/>
            <person name="Miyasato S.R."/>
            <person name="Simison M."/>
            <person name="Cherry J.M."/>
        </authorList>
    </citation>
    <scope>GENOME REANNOTATION</scope>
    <source>
        <strain>ATCC 204508 / S288c</strain>
    </source>
</reference>
<reference key="4">
    <citation type="journal article" date="2007" name="Genome Res.">
        <title>Approaching a complete repository of sequence-verified protein-encoding clones for Saccharomyces cerevisiae.</title>
        <authorList>
            <person name="Hu Y."/>
            <person name="Rolfs A."/>
            <person name="Bhullar B."/>
            <person name="Murthy T.V.S."/>
            <person name="Zhu C."/>
            <person name="Berger M.F."/>
            <person name="Camargo A.A."/>
            <person name="Kelley F."/>
            <person name="McCarron S."/>
            <person name="Jepson D."/>
            <person name="Richardson A."/>
            <person name="Raphael J."/>
            <person name="Moreira D."/>
            <person name="Taycher E."/>
            <person name="Zuo D."/>
            <person name="Mohr S."/>
            <person name="Kane M.F."/>
            <person name="Williamson J."/>
            <person name="Simpson A.J.G."/>
            <person name="Bulyk M.L."/>
            <person name="Harlow E."/>
            <person name="Marsischky G."/>
            <person name="Kolodner R.D."/>
            <person name="LaBaer J."/>
        </authorList>
    </citation>
    <scope>NUCLEOTIDE SEQUENCE [GENOMIC DNA]</scope>
    <source>
        <strain>ATCC 204508 / S288c</strain>
    </source>
</reference>
<reference key="5">
    <citation type="journal article" date="2003" name="Nature">
        <title>Global analysis of protein expression in yeast.</title>
        <authorList>
            <person name="Ghaemmaghami S."/>
            <person name="Huh W.-K."/>
            <person name="Bower K."/>
            <person name="Howson R.W."/>
            <person name="Belle A."/>
            <person name="Dephoure N."/>
            <person name="O'Shea E.K."/>
            <person name="Weissman J.S."/>
        </authorList>
    </citation>
    <scope>LEVEL OF PROTEIN EXPRESSION [LARGE SCALE ANALYSIS]</scope>
</reference>
<reference key="6">
    <citation type="journal article" date="2007" name="Proc. Natl. Acad. Sci. U.S.A.">
        <title>Analysis of phosphorylation sites on proteins from Saccharomyces cerevisiae by electron transfer dissociation (ETD) mass spectrometry.</title>
        <authorList>
            <person name="Chi A."/>
            <person name="Huttenhower C."/>
            <person name="Geer L.Y."/>
            <person name="Coon J.J."/>
            <person name="Syka J.E.P."/>
            <person name="Bai D.L."/>
            <person name="Shabanowitz J."/>
            <person name="Burke D.J."/>
            <person name="Troyanskaya O.G."/>
            <person name="Hunt D.F."/>
        </authorList>
    </citation>
    <scope>PHOSPHORYLATION [LARGE SCALE ANALYSIS] AT SER-433</scope>
    <scope>IDENTIFICATION BY MASS SPECTROMETRY [LARGE SCALE ANALYSIS]</scope>
</reference>
<reference key="7">
    <citation type="journal article" date="2009" name="Science">
        <title>Global analysis of Cdk1 substrate phosphorylation sites provides insights into evolution.</title>
        <authorList>
            <person name="Holt L.J."/>
            <person name="Tuch B.B."/>
            <person name="Villen J."/>
            <person name="Johnson A.D."/>
            <person name="Gygi S.P."/>
            <person name="Morgan D.O."/>
        </authorList>
    </citation>
    <scope>PHOSPHORYLATION [LARGE SCALE ANALYSIS] AT SER-433 AND SER-439</scope>
    <scope>IDENTIFICATION BY MASS SPECTROMETRY [LARGE SCALE ANALYSIS]</scope>
</reference>
<feature type="chain" id="PRO_0000202445" description="Uncharacterized protein YBL086C">
    <location>
        <begin position="1"/>
        <end position="466"/>
    </location>
</feature>
<feature type="domain" description="C2 NT-type" evidence="1">
    <location>
        <begin position="4"/>
        <end position="199"/>
    </location>
</feature>
<feature type="region of interest" description="Disordered" evidence="2">
    <location>
        <begin position="262"/>
        <end position="298"/>
    </location>
</feature>
<feature type="region of interest" description="Disordered" evidence="2">
    <location>
        <begin position="374"/>
        <end position="393"/>
    </location>
</feature>
<feature type="region of interest" description="Disordered" evidence="2">
    <location>
        <begin position="400"/>
        <end position="452"/>
    </location>
</feature>
<feature type="compositionally biased region" description="Polar residues" evidence="2">
    <location>
        <begin position="266"/>
        <end position="298"/>
    </location>
</feature>
<feature type="modified residue" description="Phosphoserine" evidence="5 6">
    <location>
        <position position="433"/>
    </location>
</feature>
<feature type="modified residue" description="Phosphoserine" evidence="6">
    <location>
        <position position="439"/>
    </location>
</feature>
<feature type="sequence conflict" description="In Ref. 4; AAT92663." evidence="4" ref="4">
    <original>W</original>
    <variation>R</variation>
    <location>
        <position position="318"/>
    </location>
</feature>
<comment type="miscellaneous">
    <text evidence="3">Present with 396 molecules/cell in log phase SD medium.</text>
</comment>
<comment type="similarity">
    <text evidence="4">To S.pombe SpCC1494.08c.</text>
</comment>